<proteinExistence type="inferred from homology"/>
<keyword id="KW-0004">4Fe-4S</keyword>
<keyword id="KW-0408">Iron</keyword>
<keyword id="KW-0411">Iron-sulfur</keyword>
<keyword id="KW-0414">Isoprene biosynthesis</keyword>
<keyword id="KW-0479">Metal-binding</keyword>
<keyword id="KW-0560">Oxidoreductase</keyword>
<keyword id="KW-1185">Reference proteome</keyword>
<organism>
    <name type="scientific">Shewanella sediminis (strain HAW-EB3)</name>
    <dbReference type="NCBI Taxonomy" id="425104"/>
    <lineage>
        <taxon>Bacteria</taxon>
        <taxon>Pseudomonadati</taxon>
        <taxon>Pseudomonadota</taxon>
        <taxon>Gammaproteobacteria</taxon>
        <taxon>Alteromonadales</taxon>
        <taxon>Shewanellaceae</taxon>
        <taxon>Shewanella</taxon>
    </lineage>
</organism>
<feature type="chain" id="PRO_1000076902" description="4-hydroxy-3-methylbut-2-en-1-yl diphosphate synthase (flavodoxin)">
    <location>
        <begin position="1"/>
        <end position="371"/>
    </location>
</feature>
<feature type="binding site" evidence="1">
    <location>
        <position position="270"/>
    </location>
    <ligand>
        <name>[4Fe-4S] cluster</name>
        <dbReference type="ChEBI" id="CHEBI:49883"/>
    </ligand>
</feature>
<feature type="binding site" evidence="1">
    <location>
        <position position="273"/>
    </location>
    <ligand>
        <name>[4Fe-4S] cluster</name>
        <dbReference type="ChEBI" id="CHEBI:49883"/>
    </ligand>
</feature>
<feature type="binding site" evidence="1">
    <location>
        <position position="305"/>
    </location>
    <ligand>
        <name>[4Fe-4S] cluster</name>
        <dbReference type="ChEBI" id="CHEBI:49883"/>
    </ligand>
</feature>
<feature type="binding site" evidence="1">
    <location>
        <position position="312"/>
    </location>
    <ligand>
        <name>[4Fe-4S] cluster</name>
        <dbReference type="ChEBI" id="CHEBI:49883"/>
    </ligand>
</feature>
<gene>
    <name evidence="1" type="primary">ispG</name>
    <name type="ordered locus">Ssed_1432</name>
</gene>
<protein>
    <recommendedName>
        <fullName evidence="1">4-hydroxy-3-methylbut-2-en-1-yl diphosphate synthase (flavodoxin)</fullName>
        <ecNumber evidence="1">1.17.7.3</ecNumber>
    </recommendedName>
    <alternativeName>
        <fullName evidence="1">1-hydroxy-2-methyl-2-(E)-butenyl 4-diphosphate synthase</fullName>
    </alternativeName>
</protein>
<dbReference type="EC" id="1.17.7.3" evidence="1"/>
<dbReference type="EMBL" id="CP000821">
    <property type="protein sequence ID" value="ABV36043.1"/>
    <property type="molecule type" value="Genomic_DNA"/>
</dbReference>
<dbReference type="RefSeq" id="WP_012141779.1">
    <property type="nucleotide sequence ID" value="NC_009831.1"/>
</dbReference>
<dbReference type="SMR" id="A8FT70"/>
<dbReference type="STRING" id="425104.Ssed_1432"/>
<dbReference type="KEGG" id="sse:Ssed_1432"/>
<dbReference type="eggNOG" id="COG0821">
    <property type="taxonomic scope" value="Bacteria"/>
</dbReference>
<dbReference type="HOGENOM" id="CLU_042258_0_0_6"/>
<dbReference type="OrthoDB" id="9803214at2"/>
<dbReference type="UniPathway" id="UPA00056">
    <property type="reaction ID" value="UER00096"/>
</dbReference>
<dbReference type="Proteomes" id="UP000002015">
    <property type="component" value="Chromosome"/>
</dbReference>
<dbReference type="GO" id="GO:0051539">
    <property type="term" value="F:4 iron, 4 sulfur cluster binding"/>
    <property type="evidence" value="ECO:0007669"/>
    <property type="project" value="UniProtKB-UniRule"/>
</dbReference>
<dbReference type="GO" id="GO:0046429">
    <property type="term" value="F:4-hydroxy-3-methylbut-2-en-1-yl diphosphate synthase activity (ferredoxin)"/>
    <property type="evidence" value="ECO:0007669"/>
    <property type="project" value="UniProtKB-UniRule"/>
</dbReference>
<dbReference type="GO" id="GO:0141197">
    <property type="term" value="F:4-hydroxy-3-methylbut-2-enyl-diphosphate synthase activity (flavodoxin)"/>
    <property type="evidence" value="ECO:0007669"/>
    <property type="project" value="UniProtKB-EC"/>
</dbReference>
<dbReference type="GO" id="GO:0005506">
    <property type="term" value="F:iron ion binding"/>
    <property type="evidence" value="ECO:0007669"/>
    <property type="project" value="InterPro"/>
</dbReference>
<dbReference type="GO" id="GO:0019288">
    <property type="term" value="P:isopentenyl diphosphate biosynthetic process, methylerythritol 4-phosphate pathway"/>
    <property type="evidence" value="ECO:0007669"/>
    <property type="project" value="UniProtKB-UniRule"/>
</dbReference>
<dbReference type="GO" id="GO:0016114">
    <property type="term" value="P:terpenoid biosynthetic process"/>
    <property type="evidence" value="ECO:0007669"/>
    <property type="project" value="InterPro"/>
</dbReference>
<dbReference type="FunFam" id="3.20.20.20:FF:000001">
    <property type="entry name" value="4-hydroxy-3-methylbut-2-en-1-yl diphosphate synthase (flavodoxin)"/>
    <property type="match status" value="1"/>
</dbReference>
<dbReference type="FunFam" id="3.30.413.10:FF:000002">
    <property type="entry name" value="4-hydroxy-3-methylbut-2-en-1-yl diphosphate synthase (flavodoxin)"/>
    <property type="match status" value="1"/>
</dbReference>
<dbReference type="Gene3D" id="3.20.20.20">
    <property type="entry name" value="Dihydropteroate synthase-like"/>
    <property type="match status" value="1"/>
</dbReference>
<dbReference type="Gene3D" id="3.30.413.10">
    <property type="entry name" value="Sulfite Reductase Hemoprotein, domain 1"/>
    <property type="match status" value="1"/>
</dbReference>
<dbReference type="HAMAP" id="MF_00159">
    <property type="entry name" value="IspG"/>
    <property type="match status" value="1"/>
</dbReference>
<dbReference type="InterPro" id="IPR011005">
    <property type="entry name" value="Dihydropteroate_synth-like_sf"/>
</dbReference>
<dbReference type="InterPro" id="IPR016425">
    <property type="entry name" value="IspG_bac"/>
</dbReference>
<dbReference type="InterPro" id="IPR004588">
    <property type="entry name" value="IspG_bac-typ"/>
</dbReference>
<dbReference type="InterPro" id="IPR045854">
    <property type="entry name" value="NO2/SO3_Rdtase_4Fe4S_sf"/>
</dbReference>
<dbReference type="NCBIfam" id="TIGR00612">
    <property type="entry name" value="ispG_gcpE"/>
    <property type="match status" value="1"/>
</dbReference>
<dbReference type="NCBIfam" id="NF001540">
    <property type="entry name" value="PRK00366.1"/>
    <property type="match status" value="1"/>
</dbReference>
<dbReference type="PANTHER" id="PTHR30454">
    <property type="entry name" value="4-HYDROXY-3-METHYLBUT-2-EN-1-YL DIPHOSPHATE SYNTHASE"/>
    <property type="match status" value="1"/>
</dbReference>
<dbReference type="PANTHER" id="PTHR30454:SF0">
    <property type="entry name" value="4-HYDROXY-3-METHYLBUT-2-EN-1-YL DIPHOSPHATE SYNTHASE (FERREDOXIN), CHLOROPLASTIC"/>
    <property type="match status" value="1"/>
</dbReference>
<dbReference type="Pfam" id="PF04551">
    <property type="entry name" value="GcpE"/>
    <property type="match status" value="1"/>
</dbReference>
<dbReference type="PIRSF" id="PIRSF004640">
    <property type="entry name" value="IspG"/>
    <property type="match status" value="1"/>
</dbReference>
<dbReference type="SUPFAM" id="SSF51717">
    <property type="entry name" value="Dihydropteroate synthetase-like"/>
    <property type="match status" value="1"/>
</dbReference>
<dbReference type="SUPFAM" id="SSF56014">
    <property type="entry name" value="Nitrite and sulphite reductase 4Fe-4S domain-like"/>
    <property type="match status" value="1"/>
</dbReference>
<name>ISPG_SHESH</name>
<sequence>MYSENPIKRRASTRIYVGDVPIGDGAPIAVQSMTNTLTTDVDATVAQIRALENVGADIVRVSVPTMDAAEAFKLIKQQSNIPLIADIHFDYRIALKVAEYGVDCLRINPGNIGNEERIRSVVECARDKNIPIRIGINGGSLEKDLMDKYKEPTPEALLESAMRHVDILDRLNFDQFKVSVKASDVFLAVEAYRLLAKQIVQPLHLGITEAGGARSGSVKSAVGLGMLLAEGIGDTLRVSLAADPVEEIKVGFDILKSLRIRSRGINFIACPSCSRQEFDVISTVNELERRLEDIVTPMDVSIIGCVVNGPGEALVSDIGLTGGARKSGYFDDGVRQKERFDNDNIVDSLEAKIRAKASIINGRIPAQDINK</sequence>
<comment type="function">
    <text evidence="1">Converts 2C-methyl-D-erythritol 2,4-cyclodiphosphate (ME-2,4cPP) into 1-hydroxy-2-methyl-2-(E)-butenyl 4-diphosphate.</text>
</comment>
<comment type="catalytic activity">
    <reaction evidence="1">
        <text>(2E)-4-hydroxy-3-methylbut-2-enyl diphosphate + oxidized [flavodoxin] + H2O + 2 H(+) = 2-C-methyl-D-erythritol 2,4-cyclic diphosphate + reduced [flavodoxin]</text>
        <dbReference type="Rhea" id="RHEA:43604"/>
        <dbReference type="Rhea" id="RHEA-COMP:10622"/>
        <dbReference type="Rhea" id="RHEA-COMP:10623"/>
        <dbReference type="ChEBI" id="CHEBI:15377"/>
        <dbReference type="ChEBI" id="CHEBI:15378"/>
        <dbReference type="ChEBI" id="CHEBI:57618"/>
        <dbReference type="ChEBI" id="CHEBI:58210"/>
        <dbReference type="ChEBI" id="CHEBI:58483"/>
        <dbReference type="ChEBI" id="CHEBI:128753"/>
        <dbReference type="EC" id="1.17.7.3"/>
    </reaction>
</comment>
<comment type="cofactor">
    <cofactor evidence="1">
        <name>[4Fe-4S] cluster</name>
        <dbReference type="ChEBI" id="CHEBI:49883"/>
    </cofactor>
    <text evidence="1">Binds 1 [4Fe-4S] cluster.</text>
</comment>
<comment type="pathway">
    <text evidence="1">Isoprenoid biosynthesis; isopentenyl diphosphate biosynthesis via DXP pathway; isopentenyl diphosphate from 1-deoxy-D-xylulose 5-phosphate: step 5/6.</text>
</comment>
<comment type="similarity">
    <text evidence="1">Belongs to the IspG family.</text>
</comment>
<evidence type="ECO:0000255" key="1">
    <source>
        <dbReference type="HAMAP-Rule" id="MF_00159"/>
    </source>
</evidence>
<accession>A8FT70</accession>
<reference key="1">
    <citation type="submission" date="2007-08" db="EMBL/GenBank/DDBJ databases">
        <title>Complete sequence of Shewanella sediminis HAW-EB3.</title>
        <authorList>
            <consortium name="US DOE Joint Genome Institute"/>
            <person name="Copeland A."/>
            <person name="Lucas S."/>
            <person name="Lapidus A."/>
            <person name="Barry K."/>
            <person name="Glavina del Rio T."/>
            <person name="Dalin E."/>
            <person name="Tice H."/>
            <person name="Pitluck S."/>
            <person name="Chertkov O."/>
            <person name="Brettin T."/>
            <person name="Bruce D."/>
            <person name="Detter J.C."/>
            <person name="Han C."/>
            <person name="Schmutz J."/>
            <person name="Larimer F."/>
            <person name="Land M."/>
            <person name="Hauser L."/>
            <person name="Kyrpides N."/>
            <person name="Kim E."/>
            <person name="Zhao J.-S."/>
            <person name="Richardson P."/>
        </authorList>
    </citation>
    <scope>NUCLEOTIDE SEQUENCE [LARGE SCALE GENOMIC DNA]</scope>
    <source>
        <strain>HAW-EB3</strain>
    </source>
</reference>